<organism>
    <name type="scientific">Sus scrofa</name>
    <name type="common">Pig</name>
    <dbReference type="NCBI Taxonomy" id="9823"/>
    <lineage>
        <taxon>Eukaryota</taxon>
        <taxon>Metazoa</taxon>
        <taxon>Chordata</taxon>
        <taxon>Craniata</taxon>
        <taxon>Vertebrata</taxon>
        <taxon>Euteleostomi</taxon>
        <taxon>Mammalia</taxon>
        <taxon>Eutheria</taxon>
        <taxon>Laurasiatheria</taxon>
        <taxon>Artiodactyla</taxon>
        <taxon>Suina</taxon>
        <taxon>Suidae</taxon>
        <taxon>Sus</taxon>
    </lineage>
</organism>
<evidence type="ECO:0000250" key="1">
    <source>
        <dbReference type="UniProtKB" id="G2QNH0"/>
    </source>
</evidence>
<evidence type="ECO:0000250" key="2">
    <source>
        <dbReference type="UniProtKB" id="P02722"/>
    </source>
</evidence>
<evidence type="ECO:0000250" key="3">
    <source>
        <dbReference type="UniProtKB" id="P12235"/>
    </source>
</evidence>
<evidence type="ECO:0000250" key="4">
    <source>
        <dbReference type="UniProtKB" id="P12236"/>
    </source>
</evidence>
<evidence type="ECO:0000250" key="5">
    <source>
        <dbReference type="UniProtKB" id="P32007"/>
    </source>
</evidence>
<evidence type="ECO:0000250" key="6">
    <source>
        <dbReference type="UniProtKB" id="P48962"/>
    </source>
</evidence>
<evidence type="ECO:0000255" key="7"/>
<evidence type="ECO:0000305" key="8"/>
<protein>
    <recommendedName>
        <fullName evidence="8">ADP/ATP translocase 3</fullName>
    </recommendedName>
    <alternativeName>
        <fullName evidence="4">ADP,ATP carrier protein 3</fullName>
    </alternativeName>
    <alternativeName>
        <fullName evidence="4">Adenine nucleotide translocator 3</fullName>
        <shortName evidence="4">ANT 3</shortName>
    </alternativeName>
    <alternativeName>
        <fullName evidence="8">Solute carrier family 25 member 6</fullName>
    </alternativeName>
    <component>
        <recommendedName>
            <fullName>ADP/ATP translocase 3, N-terminally processed</fullName>
        </recommendedName>
    </component>
</protein>
<accession>Q6QRN9</accession>
<gene>
    <name evidence="4" type="primary">SLC25A6</name>
    <name evidence="4" type="synonym">AAC3</name>
    <name evidence="4" type="synonym">ANT3</name>
</gene>
<comment type="function">
    <text evidence="1 4 6">ADP:ATP antiporter that mediates import of ADP into the mitochondrial matrix for ATP synthesis, and export of ATP out to fuel the cell (By similarity). Cycles between the cytoplasmic-open state (c-state) and the matrix-open state (m-state): operates by the alternating access mechanism with a single substrate-binding site intermittently exposed to either the cytosolic (c-state) or matrix (m-state) side of the inner mitochondrial membrane (By similarity). In addition to its ADP:ATP antiporter activity, also involved in mitochondrial uncoupling and mitochondrial permeability transition pore (mPTP) activity (By similarity). Plays a role in mitochondrial uncoupling by acting as a proton transporter: proton transport uncouples the proton flows via the electron transport chain and ATP synthase to reduce the efficiency of ATP production and cause mitochondrial thermogenesis. Proton transporter activity is inhibited by ADP:ATP antiporter activity, suggesting that SLC25A6/ANT3 acts as a master regulator of mitochondrial energy output by maintaining a delicate balance between ATP production (ADP:ATP antiporter activity) and thermogenesis (proton transporter activity). Proton transporter activity requires free fatty acids as cofactor, but does not transport it (By similarity). Also plays a key role in mPTP opening, a non-specific pore that enables free passage of the mitochondrial membranes to solutes of up to 1.5 kDa, and which contributes to cell death (By similarity). It is however unclear if SLC25A6/ANT3 constitutes a pore-forming component of mPTP or regulates it (By similarity).</text>
</comment>
<comment type="catalytic activity">
    <reaction evidence="6">
        <text>ADP(in) + ATP(out) = ADP(out) + ATP(in)</text>
        <dbReference type="Rhea" id="RHEA:34999"/>
        <dbReference type="ChEBI" id="CHEBI:30616"/>
        <dbReference type="ChEBI" id="CHEBI:456216"/>
    </reaction>
</comment>
<comment type="catalytic activity">
    <reaction evidence="6">
        <text>H(+)(in) = H(+)(out)</text>
        <dbReference type="Rhea" id="RHEA:34979"/>
        <dbReference type="ChEBI" id="CHEBI:15378"/>
    </reaction>
</comment>
<comment type="activity regulation">
    <text evidence="1 6">The matrix-open state (m-state) is inhibited by the membrane-permeable bongkrekic acid (BKA). The cytoplasmic-open state (c-state) is inhibited by the membrane-impermeable toxic inhibitor carboxyatractyloside (CATR) (By similarity). Proton transporter activity is inhibited by ADP:ATP antiporter activity (By similarity).</text>
</comment>
<comment type="subunit">
    <text evidence="1 2 5">Monomer (By similarity). Found in a complex with ARL2, ARL2BP and SLC25A6/ANT3 (By similarity).</text>
</comment>
<comment type="subcellular location">
    <subcellularLocation>
        <location evidence="2">Mitochondrion inner membrane</location>
        <topology evidence="7">Multi-pass membrane protein</topology>
    </subcellularLocation>
    <subcellularLocation>
        <location evidence="4">Membrane</location>
        <topology evidence="7">Multi-pass membrane protein</topology>
    </subcellularLocation>
    <text evidence="3">The complex formed with ARL2BP, ARL2 and SLC25A6/ANT3 is expressed in mitochondria (By similarity). May localize to non-mitochondrial membranes (By similarity).</text>
</comment>
<comment type="domain">
    <text evidence="2">The transmembrane helices are not perpendicular to the plane of the membrane, but cross the membrane at an angle. Odd-numbered transmembrane helices exhibit a sharp kink, due to the presence of a conserved proline residue.</text>
</comment>
<comment type="PTM">
    <text evidence="4">Trimethylated by ANTKMT at Lys-52.</text>
</comment>
<comment type="similarity">
    <text evidence="8">Belongs to the mitochondrial carrier (TC 2.A.29) family.</text>
</comment>
<sequence length="298" mass="32910">MTEQAISFAKDFLAGGIAAAISKTAVAPIERVKLLLQVQHASKQIAADKQYKGIVDCIVRIPKEQGVLSFWRGNLANVIRYFPTQALNFAFKDKYKQIFLGGVDKHTQFWRYFAGNLASGGAAGATSLCFVYPLDFARTRLAADVGKSATEREFKGLGDCLVKITKSDGIRGLYQGFNVSVQGIIIYRAAYFGVYGTAKGMLPDPRNTHIVVSWMIAQTVTAVAGVFSYPFDTVRRRMMMQSGRKGADIMYKGTLDCWRKIFKDEGGKAFFKGAWSNVLRGMGGAFVLVLYDELKKVI</sequence>
<keyword id="KW-0007">Acetylation</keyword>
<keyword id="KW-0050">Antiport</keyword>
<keyword id="KW-0053">Apoptosis</keyword>
<keyword id="KW-0472">Membrane</keyword>
<keyword id="KW-0488">Methylation</keyword>
<keyword id="KW-0496">Mitochondrion</keyword>
<keyword id="KW-0999">Mitochondrion inner membrane</keyword>
<keyword id="KW-1185">Reference proteome</keyword>
<keyword id="KW-0677">Repeat</keyword>
<keyword id="KW-0812">Transmembrane</keyword>
<keyword id="KW-1133">Transmembrane helix</keyword>
<keyword id="KW-0813">Transport</keyword>
<reference key="1">
    <citation type="submission" date="2004-01" db="EMBL/GenBank/DDBJ databases">
        <title>Identification of differentially expressed genes in porcine embryos.</title>
        <authorList>
            <person name="Lee H.Y."/>
            <person name="Cui X.S."/>
            <person name="Sin M.L."/>
            <person name="Hwang K.C."/>
            <person name="Kim N.H."/>
        </authorList>
    </citation>
    <scope>NUCLEOTIDE SEQUENCE [MRNA]</scope>
</reference>
<feature type="chain" id="PRO_0000425782" description="ADP/ATP translocase 3">
    <location>
        <begin position="1"/>
        <end position="298"/>
    </location>
</feature>
<feature type="initiator methionine" description="Removed; alternate" evidence="4">
    <location>
        <position position="1"/>
    </location>
</feature>
<feature type="chain" id="PRO_0000090585" description="ADP/ATP translocase 3, N-terminally processed">
    <location>
        <begin position="2"/>
        <end position="298"/>
    </location>
</feature>
<feature type="topological domain" description="Mitochondrial intermembrane" evidence="8">
    <location>
        <begin position="1"/>
        <end position="7"/>
    </location>
</feature>
<feature type="transmembrane region" description="Helical; Name=1" evidence="2">
    <location>
        <begin position="8"/>
        <end position="37"/>
    </location>
</feature>
<feature type="topological domain" description="Mitochondrial matrix" evidence="8">
    <location>
        <begin position="38"/>
        <end position="74"/>
    </location>
</feature>
<feature type="transmembrane region" description="Helical; Name=2" evidence="2">
    <location>
        <begin position="75"/>
        <end position="99"/>
    </location>
</feature>
<feature type="topological domain" description="Mitochondrial intermembrane" evidence="8">
    <location>
        <begin position="100"/>
        <end position="109"/>
    </location>
</feature>
<feature type="transmembrane region" description="Helical; Name=3" evidence="2">
    <location>
        <begin position="110"/>
        <end position="130"/>
    </location>
</feature>
<feature type="topological domain" description="Mitochondrial matrix" evidence="8">
    <location>
        <begin position="131"/>
        <end position="178"/>
    </location>
</feature>
<feature type="transmembrane region" description="Helical; Name=4" evidence="2">
    <location>
        <begin position="179"/>
        <end position="199"/>
    </location>
</feature>
<feature type="topological domain" description="Mitochondrial intermembrane" evidence="8">
    <location>
        <begin position="200"/>
        <end position="210"/>
    </location>
</feature>
<feature type="transmembrane region" description="Helical; Name=5" evidence="2">
    <location>
        <begin position="211"/>
        <end position="231"/>
    </location>
</feature>
<feature type="topological domain" description="Mitochondrial matrix" evidence="8">
    <location>
        <begin position="232"/>
        <end position="273"/>
    </location>
</feature>
<feature type="transmembrane region" description="Helical; Name=6" evidence="2">
    <location>
        <begin position="274"/>
        <end position="291"/>
    </location>
</feature>
<feature type="topological domain" description="Mitochondrial intermembrane" evidence="8">
    <location>
        <begin position="292"/>
        <end position="298"/>
    </location>
</feature>
<feature type="repeat" description="Solcar 1">
    <location>
        <begin position="6"/>
        <end position="98"/>
    </location>
</feature>
<feature type="repeat" description="Solcar 2">
    <location>
        <begin position="111"/>
        <end position="201"/>
    </location>
</feature>
<feature type="repeat" description="Solcar 3">
    <location>
        <begin position="212"/>
        <end position="297"/>
    </location>
</feature>
<feature type="region of interest" description="Important for transport activity" evidence="3">
    <location>
        <begin position="235"/>
        <end position="240"/>
    </location>
</feature>
<feature type="short sequence motif" description="Nucleotide carrier signature motif" evidence="2">
    <location>
        <begin position="235"/>
        <end position="240"/>
    </location>
</feature>
<feature type="binding site" evidence="2">
    <location>
        <position position="80"/>
    </location>
    <ligand>
        <name>ADP</name>
        <dbReference type="ChEBI" id="CHEBI:456216"/>
    </ligand>
</feature>
<feature type="binding site" evidence="2">
    <location>
        <position position="92"/>
    </location>
    <ligand>
        <name>ADP</name>
        <dbReference type="ChEBI" id="CHEBI:456216"/>
    </ligand>
</feature>
<feature type="binding site" evidence="2">
    <location>
        <position position="235"/>
    </location>
    <ligand>
        <name>ADP</name>
        <dbReference type="ChEBI" id="CHEBI:456216"/>
    </ligand>
</feature>
<feature type="modified residue" description="N-acetylmethionine" evidence="4">
    <location>
        <position position="1"/>
    </location>
</feature>
<feature type="modified residue" description="N-acetylthreonine; in ADP/ATP translocase 3, N-terminally processed" evidence="4">
    <location>
        <position position="2"/>
    </location>
</feature>
<feature type="modified residue" description="N6,N6,N6-trimethyllysine" evidence="4">
    <location>
        <position position="52"/>
    </location>
</feature>
<feature type="modified residue" description="N6-acetyllysine" evidence="4">
    <location>
        <position position="105"/>
    </location>
</feature>
<feature type="modified residue" description="N6-acetyllysine" evidence="4">
    <location>
        <position position="268"/>
    </location>
</feature>
<dbReference type="EMBL" id="AY528245">
    <property type="protein sequence ID" value="AAS20953.1"/>
    <property type="molecule type" value="mRNA"/>
</dbReference>
<dbReference type="RefSeq" id="NP_999583.1">
    <property type="nucleotide sequence ID" value="NM_214418.2"/>
</dbReference>
<dbReference type="SMR" id="Q6QRN9"/>
<dbReference type="FunCoup" id="Q6QRN9">
    <property type="interactions" value="617"/>
</dbReference>
<dbReference type="IntAct" id="Q6QRN9">
    <property type="interactions" value="1"/>
</dbReference>
<dbReference type="STRING" id="9823.ENSSSCP00000048214"/>
<dbReference type="iPTMnet" id="Q6QRN9"/>
<dbReference type="PaxDb" id="9823-ENSSSCP00000013421"/>
<dbReference type="PeptideAtlas" id="Q6QRN9"/>
<dbReference type="GeneID" id="403155"/>
<dbReference type="KEGG" id="ssc:403155"/>
<dbReference type="CTD" id="293"/>
<dbReference type="eggNOG" id="KOG0749">
    <property type="taxonomic scope" value="Eukaryota"/>
</dbReference>
<dbReference type="InParanoid" id="Q6QRN9"/>
<dbReference type="OrthoDB" id="270584at2759"/>
<dbReference type="Proteomes" id="UP000008227">
    <property type="component" value="Unplaced"/>
</dbReference>
<dbReference type="Proteomes" id="UP000314985">
    <property type="component" value="Unplaced"/>
</dbReference>
<dbReference type="Proteomes" id="UP000694570">
    <property type="component" value="Unplaced"/>
</dbReference>
<dbReference type="Proteomes" id="UP000694571">
    <property type="component" value="Unplaced"/>
</dbReference>
<dbReference type="Proteomes" id="UP000694720">
    <property type="component" value="Unplaced"/>
</dbReference>
<dbReference type="Proteomes" id="UP000694722">
    <property type="component" value="Unplaced"/>
</dbReference>
<dbReference type="Proteomes" id="UP000694723">
    <property type="component" value="Unplaced"/>
</dbReference>
<dbReference type="Proteomes" id="UP000694724">
    <property type="component" value="Unplaced"/>
</dbReference>
<dbReference type="Proteomes" id="UP000694725">
    <property type="component" value="Unplaced"/>
</dbReference>
<dbReference type="Proteomes" id="UP000694726">
    <property type="component" value="Unplaced"/>
</dbReference>
<dbReference type="Proteomes" id="UP000694727">
    <property type="component" value="Unplaced"/>
</dbReference>
<dbReference type="Proteomes" id="UP000694728">
    <property type="component" value="Unplaced"/>
</dbReference>
<dbReference type="GO" id="GO:0016020">
    <property type="term" value="C:membrane"/>
    <property type="evidence" value="ECO:0000250"/>
    <property type="project" value="UniProtKB"/>
</dbReference>
<dbReference type="GO" id="GO:0005743">
    <property type="term" value="C:mitochondrial inner membrane"/>
    <property type="evidence" value="ECO:0007669"/>
    <property type="project" value="UniProtKB-SubCell"/>
</dbReference>
<dbReference type="GO" id="GO:0005471">
    <property type="term" value="F:ATP:ADP antiporter activity"/>
    <property type="evidence" value="ECO:0007669"/>
    <property type="project" value="InterPro"/>
</dbReference>
<dbReference type="GO" id="GO:0006915">
    <property type="term" value="P:apoptotic process"/>
    <property type="evidence" value="ECO:0007669"/>
    <property type="project" value="UniProtKB-KW"/>
</dbReference>
<dbReference type="GO" id="GO:0140021">
    <property type="term" value="P:mitochondrial ADP transmembrane transport"/>
    <property type="evidence" value="ECO:0007669"/>
    <property type="project" value="InterPro"/>
</dbReference>
<dbReference type="GO" id="GO:1990544">
    <property type="term" value="P:mitochondrial ATP transmembrane transport"/>
    <property type="evidence" value="ECO:0007669"/>
    <property type="project" value="InterPro"/>
</dbReference>
<dbReference type="GO" id="GO:1901029">
    <property type="term" value="P:negative regulation of mitochondrial outer membrane permeabilization involved in apoptotic signaling pathway"/>
    <property type="evidence" value="ECO:0000318"/>
    <property type="project" value="GO_Central"/>
</dbReference>
<dbReference type="FunFam" id="1.50.40.10:FF:000002">
    <property type="entry name" value="Putative ADP/ATP translocase 2-like"/>
    <property type="match status" value="1"/>
</dbReference>
<dbReference type="Gene3D" id="1.50.40.10">
    <property type="entry name" value="Mitochondrial carrier domain"/>
    <property type="match status" value="1"/>
</dbReference>
<dbReference type="InterPro" id="IPR002113">
    <property type="entry name" value="ADT_euk_type"/>
</dbReference>
<dbReference type="InterPro" id="IPR002067">
    <property type="entry name" value="Mit_carrier"/>
</dbReference>
<dbReference type="InterPro" id="IPR018108">
    <property type="entry name" value="Mitochondrial_sb/sol_carrier"/>
</dbReference>
<dbReference type="InterPro" id="IPR023395">
    <property type="entry name" value="Mt_carrier_dom_sf"/>
</dbReference>
<dbReference type="PANTHER" id="PTHR45635">
    <property type="entry name" value="ADP,ATP CARRIER PROTEIN 1-RELATED-RELATED"/>
    <property type="match status" value="1"/>
</dbReference>
<dbReference type="PANTHER" id="PTHR45635:SF13">
    <property type="entry name" value="ADP_ATP TRANSLOCASE 3"/>
    <property type="match status" value="1"/>
</dbReference>
<dbReference type="Pfam" id="PF00153">
    <property type="entry name" value="Mito_carr"/>
    <property type="match status" value="3"/>
</dbReference>
<dbReference type="PRINTS" id="PR00927">
    <property type="entry name" value="ADPTRNSLCASE"/>
</dbReference>
<dbReference type="PRINTS" id="PR00926">
    <property type="entry name" value="MITOCARRIER"/>
</dbReference>
<dbReference type="SUPFAM" id="SSF103506">
    <property type="entry name" value="Mitochondrial carrier"/>
    <property type="match status" value="1"/>
</dbReference>
<dbReference type="PROSITE" id="PS50920">
    <property type="entry name" value="SOLCAR"/>
    <property type="match status" value="3"/>
</dbReference>
<proteinExistence type="evidence at transcript level"/>
<name>ADT3_PIG</name>